<organism>
    <name type="scientific">Invertebrate iridescent virus 3</name>
    <name type="common">IIV-3</name>
    <name type="synonym">Mosquito iridescent virus</name>
    <dbReference type="NCBI Taxonomy" id="345201"/>
    <lineage>
        <taxon>Viruses</taxon>
        <taxon>Varidnaviria</taxon>
        <taxon>Bamfordvirae</taxon>
        <taxon>Nucleocytoviricota</taxon>
        <taxon>Megaviricetes</taxon>
        <taxon>Pimascovirales</taxon>
        <taxon>Iridoviridae</taxon>
        <taxon>Betairidovirinae</taxon>
        <taxon>Chloriridovirus</taxon>
    </lineage>
</organism>
<organismHost>
    <name type="scientific">Aedes vexans</name>
    <name type="common">Inland floodwater mosquito</name>
    <name type="synonym">Culex vexans</name>
    <dbReference type="NCBI Taxonomy" id="7163"/>
</organismHost>
<organismHost>
    <name type="scientific">Culex territans</name>
    <dbReference type="NCBI Taxonomy" id="42431"/>
</organismHost>
<organismHost>
    <name type="scientific">Culiseta annulata</name>
    <dbReference type="NCBI Taxonomy" id="332058"/>
</organismHost>
<organismHost>
    <name type="scientific">Ochlerotatus sollicitans</name>
    <name type="common">eastern saltmarsh mosquito</name>
    <dbReference type="NCBI Taxonomy" id="310513"/>
</organismHost>
<organismHost>
    <name type="scientific">Ochlerotatus taeniorhynchus</name>
    <name type="common">Black salt marsh mosquito</name>
    <name type="synonym">Aedes taeniorhynchus</name>
    <dbReference type="NCBI Taxonomy" id="329105"/>
</organismHost>
<organismHost>
    <name type="scientific">Psorophora ferox</name>
    <dbReference type="NCBI Taxonomy" id="7183"/>
</organismHost>
<gene>
    <name type="ORF">IIV3-121R</name>
</gene>
<evidence type="ECO:0000255" key="1"/>
<evidence type="ECO:0000255" key="2">
    <source>
        <dbReference type="PROSITE-ProRule" id="PRU00551"/>
    </source>
</evidence>
<evidence type="ECO:0000256" key="3">
    <source>
        <dbReference type="SAM" id="MobiDB-lite"/>
    </source>
</evidence>
<evidence type="ECO:0000305" key="4"/>
<proteinExistence type="inferred from homology"/>
<comment type="similarity">
    <text evidence="4">Belongs to the IIV-6 184L family.</text>
</comment>
<keyword id="KW-0067">ATP-binding</keyword>
<keyword id="KW-0175">Coiled coil</keyword>
<keyword id="KW-0347">Helicase</keyword>
<keyword id="KW-0378">Hydrolase</keyword>
<keyword id="KW-0547">Nucleotide-binding</keyword>
<keyword id="KW-1185">Reference proteome</keyword>
<sequence length="941" mass="109757">MNQLYSFFKNCNSFGAPPPLYTHVFLGSRPGKFYLSASSDNEFYTLYNSLVEAKTPVCVAEKQDDYVPLLGDVDLKVCIDQENAFLKKTRVLYGEEELRAIVKCFQDTIKKNVVDWRDYHLICVALEKKPYMAGEYLKNGFHLHFPYLYLEKEKVKNVIIPKIKEMVAAFRLGSGKRLFADIDDAPENFIDDVTNKCWLMYGSSKSEDKKPYRISQVYSGNLEPMDLYEAFSIKPFYTKEEEPITVTVDNVKKILPQLLSISSIKKEVLNVKTPMDLKIPTKIYLKQELKDIEGENSETIKRNLKDAKDLLKILNKKRANEYNSWWDIGIILFNIGHGCEDAFTIWDKWSSYSDKYDPDACVQVWNSMHLRNPRFSKIKGMGSLRWYVKQDNLKGYTAWVDKMHGLVLDEKNLVECVTRLEIMTTDTPLARLMLDLYSGEYVFSDAGWYSFNGTIWSPVKVLKDFRVKFEHISTKYKEMRKRIMELIYHKNDDSGRDSEEDSQEEEVSSSQEQLSAKHRAILMAKYRDINRAINKLENFATQNGILKMCEVFFYNEDFSDLLDENPLLIAFKNGVFDFETLTFRKGLQSDYLSKTLNIRYDDTLTDDSEEVLELYNFLSKIFPDEKVRAYFVDQICEVFRGGNRDKIAMFWTGNGNNGKSVTQRLFETMIGKKLAVKLSTSVLTERIQPGQPNPQLTRLRGGIRWGVFDEWGKTEQILSGSLNVLTGGDSLPCRDLFQKGSDSSDFTPMFKLLCICNELPCLKDAVDATWDRIRIIPFESKFVAREKCPETEQEQREKKLFLCDTEITQKDRMESLARALGWYLVKIFKEKEKKRRNGTYQVTIPDKVNDAKLKYQAKCDILAFFMEETYLKTDNQDHKIPFDDMYISFKNWYINSFSGKMVTLNKHEFIEMVRNKYNLTETDKALRGYMWNRNYDDSDDE</sequence>
<reference key="1">
    <citation type="journal article" date="2006" name="J. Virol.">
        <title>Genome of invertebrate iridescent virus type 3 (mosquito iridescent virus).</title>
        <authorList>
            <person name="Delhon G."/>
            <person name="Tulman E.R."/>
            <person name="Afonso C.L."/>
            <person name="Lu Z."/>
            <person name="Becnel J.J."/>
            <person name="Moser B.A."/>
            <person name="Kutish G.F."/>
            <person name="Rock D.L."/>
        </authorList>
    </citation>
    <scope>NUCLEOTIDE SEQUENCE [LARGE SCALE GENOMIC DNA]</scope>
</reference>
<dbReference type="EC" id="3.6.4.-"/>
<dbReference type="EMBL" id="DQ643392">
    <property type="protein sequence ID" value="ABF82151.1"/>
    <property type="molecule type" value="Genomic_DNA"/>
</dbReference>
<dbReference type="RefSeq" id="YP_654693.1">
    <property type="nucleotide sequence ID" value="NC_008187.1"/>
</dbReference>
<dbReference type="SMR" id="Q196T9"/>
<dbReference type="KEGG" id="vg:4156332"/>
<dbReference type="OrthoDB" id="987at10239"/>
<dbReference type="Proteomes" id="UP000001358">
    <property type="component" value="Genome"/>
</dbReference>
<dbReference type="GO" id="GO:0005524">
    <property type="term" value="F:ATP binding"/>
    <property type="evidence" value="ECO:0007669"/>
    <property type="project" value="UniProtKB-KW"/>
</dbReference>
<dbReference type="GO" id="GO:0004386">
    <property type="term" value="F:helicase activity"/>
    <property type="evidence" value="ECO:0007669"/>
    <property type="project" value="UniProtKB-KW"/>
</dbReference>
<dbReference type="GO" id="GO:0016817">
    <property type="term" value="F:hydrolase activity, acting on acid anhydrides"/>
    <property type="evidence" value="ECO:0007669"/>
    <property type="project" value="InterPro"/>
</dbReference>
<dbReference type="Gene3D" id="3.40.50.300">
    <property type="entry name" value="P-loop containing nucleotide triphosphate hydrolases"/>
    <property type="match status" value="1"/>
</dbReference>
<dbReference type="InterPro" id="IPR056443">
    <property type="entry name" value="AEP_C962R"/>
</dbReference>
<dbReference type="InterPro" id="IPR014015">
    <property type="entry name" value="Helicase_SF3_DNA-vir"/>
</dbReference>
<dbReference type="InterPro" id="IPR027417">
    <property type="entry name" value="P-loop_NTPase"/>
</dbReference>
<dbReference type="InterPro" id="IPR014818">
    <property type="entry name" value="Phage/plasmid_primase_P4_C"/>
</dbReference>
<dbReference type="InterPro" id="IPR014819">
    <property type="entry name" value="PriCT_2"/>
</dbReference>
<dbReference type="InterPro" id="IPR051620">
    <property type="entry name" value="Viral_Helicase-Primase_Cplx"/>
</dbReference>
<dbReference type="PANTHER" id="PTHR35372">
    <property type="entry name" value="ATP BINDING PROTEIN-RELATED"/>
    <property type="match status" value="1"/>
</dbReference>
<dbReference type="PANTHER" id="PTHR35372:SF2">
    <property type="entry name" value="SF3 HELICASE DOMAIN-CONTAINING PROTEIN"/>
    <property type="match status" value="1"/>
</dbReference>
<dbReference type="Pfam" id="PF23162">
    <property type="entry name" value="AEP_C962R"/>
    <property type="match status" value="1"/>
</dbReference>
<dbReference type="Pfam" id="PF08706">
    <property type="entry name" value="D5_N"/>
    <property type="match status" value="1"/>
</dbReference>
<dbReference type="Pfam" id="PF08707">
    <property type="entry name" value="PriCT_2"/>
    <property type="match status" value="1"/>
</dbReference>
<dbReference type="SMART" id="SM00885">
    <property type="entry name" value="D5_N"/>
    <property type="match status" value="1"/>
</dbReference>
<dbReference type="SUPFAM" id="SSF52540">
    <property type="entry name" value="P-loop containing nucleoside triphosphate hydrolases"/>
    <property type="match status" value="1"/>
</dbReference>
<dbReference type="PROSITE" id="PS51206">
    <property type="entry name" value="SF3_HELICASE_1"/>
    <property type="match status" value="1"/>
</dbReference>
<feature type="chain" id="PRO_0000378037" description="Putative helicase 121R">
    <location>
        <begin position="1"/>
        <end position="941"/>
    </location>
</feature>
<feature type="domain" description="SF3 helicase" evidence="2">
    <location>
        <begin position="609"/>
        <end position="791"/>
    </location>
</feature>
<feature type="region of interest" description="Disordered" evidence="3">
    <location>
        <begin position="492"/>
        <end position="514"/>
    </location>
</feature>
<feature type="coiled-coil region" evidence="1">
    <location>
        <begin position="285"/>
        <end position="323"/>
    </location>
</feature>
<feature type="compositionally biased region" description="Acidic residues" evidence="3">
    <location>
        <begin position="498"/>
        <end position="507"/>
    </location>
</feature>
<feature type="binding site" evidence="2">
    <location>
        <begin position="653"/>
        <end position="660"/>
    </location>
    <ligand>
        <name>ATP</name>
        <dbReference type="ChEBI" id="CHEBI:30616"/>
    </ligand>
</feature>
<protein>
    <recommendedName>
        <fullName>Putative helicase 121R</fullName>
        <ecNumber>3.6.4.-</ecNumber>
    </recommendedName>
</protein>
<accession>Q196T9</accession>
<name>VF184_IIV3</name>